<dbReference type="EMBL" id="EF094486">
    <property type="protein sequence ID" value="ABL84284.1"/>
    <property type="molecule type" value="Genomic_DNA"/>
</dbReference>
<dbReference type="RefSeq" id="XP_011764734.1">
    <property type="nucleotide sequence ID" value="XM_011766432.1"/>
</dbReference>
<dbReference type="RefSeq" id="XP_011764735.1">
    <property type="nucleotide sequence ID" value="XM_011766433.1"/>
</dbReference>
<dbReference type="STRING" id="9545.ENSMNEP00000035064"/>
<dbReference type="GlyCosmos" id="A1YL69">
    <property type="glycosylation" value="1 site, No reported glycans"/>
</dbReference>
<dbReference type="GeneID" id="105496235"/>
<dbReference type="Proteomes" id="UP000233120">
    <property type="component" value="Unassembled WGS sequence"/>
</dbReference>
<dbReference type="GO" id="GO:0005615">
    <property type="term" value="C:extracellular space"/>
    <property type="evidence" value="ECO:0000250"/>
    <property type="project" value="UniProtKB"/>
</dbReference>
<dbReference type="GO" id="GO:0031779">
    <property type="term" value="F:melanocortin receptor binding"/>
    <property type="evidence" value="ECO:0007669"/>
    <property type="project" value="TreeGrafter"/>
</dbReference>
<dbReference type="GO" id="GO:0005184">
    <property type="term" value="F:neuropeptide hormone activity"/>
    <property type="evidence" value="ECO:0007669"/>
    <property type="project" value="TreeGrafter"/>
</dbReference>
<dbReference type="GO" id="GO:0009755">
    <property type="term" value="P:hormone-mediated signaling pathway"/>
    <property type="evidence" value="ECO:0007669"/>
    <property type="project" value="InterPro"/>
</dbReference>
<dbReference type="GO" id="GO:0042438">
    <property type="term" value="P:melanin biosynthetic process"/>
    <property type="evidence" value="ECO:0000250"/>
    <property type="project" value="UniProtKB"/>
</dbReference>
<dbReference type="GO" id="GO:0032438">
    <property type="term" value="P:melanosome organization"/>
    <property type="evidence" value="ECO:0007669"/>
    <property type="project" value="TreeGrafter"/>
</dbReference>
<dbReference type="FunFam" id="4.10.760.10:FF:000002">
    <property type="entry name" value="Agouti-signaling protein"/>
    <property type="match status" value="1"/>
</dbReference>
<dbReference type="Gene3D" id="4.10.760.10">
    <property type="entry name" value="Agouti domain"/>
    <property type="match status" value="1"/>
</dbReference>
<dbReference type="InterPro" id="IPR007733">
    <property type="entry name" value="Agouti"/>
</dbReference>
<dbReference type="InterPro" id="IPR027300">
    <property type="entry name" value="Agouti_dom"/>
</dbReference>
<dbReference type="InterPro" id="IPR036836">
    <property type="entry name" value="Agouti_dom_sf"/>
</dbReference>
<dbReference type="PANTHER" id="PTHR16551">
    <property type="entry name" value="AGOUTI RELATED"/>
    <property type="match status" value="1"/>
</dbReference>
<dbReference type="PANTHER" id="PTHR16551:SF1">
    <property type="entry name" value="AGOUTI-SIGNALING PROTEIN"/>
    <property type="match status" value="1"/>
</dbReference>
<dbReference type="Pfam" id="PF05039">
    <property type="entry name" value="Agouti"/>
    <property type="match status" value="1"/>
</dbReference>
<dbReference type="SMART" id="SM00792">
    <property type="entry name" value="Agouti"/>
    <property type="match status" value="1"/>
</dbReference>
<dbReference type="SUPFAM" id="SSF57055">
    <property type="entry name" value="Agouti-related protein"/>
    <property type="match status" value="1"/>
</dbReference>
<dbReference type="PROSITE" id="PS60024">
    <property type="entry name" value="AGOUTI_1"/>
    <property type="match status" value="1"/>
</dbReference>
<dbReference type="PROSITE" id="PS51150">
    <property type="entry name" value="AGOUTI_2"/>
    <property type="match status" value="1"/>
</dbReference>
<comment type="function">
    <text evidence="3">Involved in the regulation of melanogenesis. The binding of ASP to MC1R precludes alpha-MSH initiated signaling and thus blocks production of cAMP, leading to a down-regulation of eumelanogenesis (brown/black pigment) and thus increasing synthesis of pheomelanin (yellow/red pigment) (By similarity).</text>
</comment>
<comment type="subcellular location">
    <subcellularLocation>
        <location evidence="2">Secreted</location>
    </subcellularLocation>
</comment>
<comment type="domain">
    <text evidence="1">The presence of a 'disulfide through disulfide knot' structurally defines this protein as a knottin.</text>
</comment>
<organism>
    <name type="scientific">Macaca nemestrina</name>
    <name type="common">Pig-tailed macaque</name>
    <dbReference type="NCBI Taxonomy" id="9545"/>
    <lineage>
        <taxon>Eukaryota</taxon>
        <taxon>Metazoa</taxon>
        <taxon>Chordata</taxon>
        <taxon>Craniata</taxon>
        <taxon>Vertebrata</taxon>
        <taxon>Euteleostomi</taxon>
        <taxon>Mammalia</taxon>
        <taxon>Eutheria</taxon>
        <taxon>Euarchontoglires</taxon>
        <taxon>Primates</taxon>
        <taxon>Haplorrhini</taxon>
        <taxon>Catarrhini</taxon>
        <taxon>Cercopithecidae</taxon>
        <taxon>Cercopithecinae</taxon>
        <taxon>Macaca</taxon>
    </lineage>
</organism>
<proteinExistence type="inferred from homology"/>
<protein>
    <recommendedName>
        <fullName>Agouti-signaling protein</fullName>
        <shortName>ASP</shortName>
    </recommendedName>
    <alternativeName>
        <fullName>Agouti switch protein</fullName>
    </alternativeName>
</protein>
<reference key="1">
    <citation type="journal article" date="2006" name="Mamm. Genome">
        <title>Investigation of the role of the agouti signaling protein gene (ASIP) in coat color evolution in primates.</title>
        <authorList>
            <person name="Mundy N.I."/>
            <person name="Kelly J."/>
        </authorList>
    </citation>
    <scope>NUCLEOTIDE SEQUENCE [GENOMIC DNA]</scope>
</reference>
<gene>
    <name type="primary">ASIP</name>
</gene>
<accession>A1YL69</accession>
<sequence>MDVTRLLLATLLVFLCFFTAYSHPPPEEKLRDDRSLRSNSSVNLLDFPSVSIVALNKNSKQISRKEAEKKRSSKKEASMKKVARPRTPLSAPCVATRDSCKPPAPACCDPCASCQCRFFRSACSCRVLSLNC</sequence>
<feature type="signal peptide" evidence="4">
    <location>
        <begin position="1"/>
        <end position="22"/>
    </location>
</feature>
<feature type="chain" id="PRO_0000285057" description="Agouti-signaling protein">
    <location>
        <begin position="23"/>
        <end position="132"/>
    </location>
</feature>
<feature type="domain" description="Agouti" evidence="5">
    <location>
        <begin position="93"/>
        <end position="132"/>
    </location>
</feature>
<feature type="region of interest" description="Disordered" evidence="6">
    <location>
        <begin position="61"/>
        <end position="87"/>
    </location>
</feature>
<feature type="compositionally biased region" description="Basic and acidic residues" evidence="6">
    <location>
        <begin position="63"/>
        <end position="79"/>
    </location>
</feature>
<feature type="glycosylation site" description="N-linked (GlcNAc...) asparagine" evidence="4">
    <location>
        <position position="39"/>
    </location>
</feature>
<feature type="disulfide bond" evidence="5">
    <location>
        <begin position="93"/>
        <end position="108"/>
    </location>
</feature>
<feature type="disulfide bond" evidence="5">
    <location>
        <begin position="100"/>
        <end position="114"/>
    </location>
</feature>
<feature type="disulfide bond" evidence="5">
    <location>
        <begin position="107"/>
        <end position="125"/>
    </location>
</feature>
<feature type="disulfide bond" evidence="5">
    <location>
        <begin position="111"/>
        <end position="132"/>
    </location>
</feature>
<feature type="disulfide bond" evidence="5">
    <location>
        <begin position="116"/>
        <end position="123"/>
    </location>
</feature>
<name>ASIP_MACNE</name>
<keyword id="KW-1015">Disulfide bond</keyword>
<keyword id="KW-0325">Glycoprotein</keyword>
<keyword id="KW-0960">Knottin</keyword>
<keyword id="KW-1185">Reference proteome</keyword>
<keyword id="KW-0964">Secreted</keyword>
<keyword id="KW-0732">Signal</keyword>
<evidence type="ECO:0000250" key="1"/>
<evidence type="ECO:0000250" key="2">
    <source>
        <dbReference type="UniProtKB" id="P42127"/>
    </source>
</evidence>
<evidence type="ECO:0000250" key="3">
    <source>
        <dbReference type="UniProtKB" id="Q03288"/>
    </source>
</evidence>
<evidence type="ECO:0000255" key="4"/>
<evidence type="ECO:0000255" key="5">
    <source>
        <dbReference type="PROSITE-ProRule" id="PRU00494"/>
    </source>
</evidence>
<evidence type="ECO:0000256" key="6">
    <source>
        <dbReference type="SAM" id="MobiDB-lite"/>
    </source>
</evidence>